<comment type="function">
    <text evidence="1">With S4 and S12 plays an important role in translational accuracy.</text>
</comment>
<comment type="function">
    <text evidence="1">Located at the back of the 30S subunit body where it stabilizes the conformation of the head with respect to the body.</text>
</comment>
<comment type="subunit">
    <text evidence="1">Part of the 30S ribosomal subunit. Contacts proteins S4 and S8.</text>
</comment>
<comment type="domain">
    <text>The N-terminal domain interacts with the head of the 30S subunit; the C-terminal domain interacts with the body and contacts protein S4. The interaction surface between S4 and S5 is involved in control of translational fidelity.</text>
</comment>
<comment type="similarity">
    <text evidence="1">Belongs to the universal ribosomal protein uS5 family.</text>
</comment>
<reference key="1">
    <citation type="submission" date="2006-06" db="EMBL/GenBank/DDBJ databases">
        <title>Complete sequence of Rubrobacter xylanophilus DSM 9941.</title>
        <authorList>
            <consortium name="US DOE Joint Genome Institute"/>
            <person name="Copeland A."/>
            <person name="Lucas S."/>
            <person name="Lapidus A."/>
            <person name="Barry K."/>
            <person name="Detter J.C."/>
            <person name="Glavina del Rio T."/>
            <person name="Hammon N."/>
            <person name="Israni S."/>
            <person name="Dalin E."/>
            <person name="Tice H."/>
            <person name="Pitluck S."/>
            <person name="Munk A.C."/>
            <person name="Brettin T."/>
            <person name="Bruce D."/>
            <person name="Han C."/>
            <person name="Tapia R."/>
            <person name="Gilna P."/>
            <person name="Schmutz J."/>
            <person name="Larimer F."/>
            <person name="Land M."/>
            <person name="Hauser L."/>
            <person name="Kyrpides N."/>
            <person name="Lykidis A."/>
            <person name="da Costa M.S."/>
            <person name="Rainey F.A."/>
            <person name="Empadinhas N."/>
            <person name="Jolivet E."/>
            <person name="Battista J.R."/>
            <person name="Richardson P."/>
        </authorList>
    </citation>
    <scope>NUCLEOTIDE SEQUENCE [LARGE SCALE GENOMIC DNA]</scope>
    <source>
        <strain>DSM 9941 / JCM 11954 / NBRC 16129 / PRD-1</strain>
    </source>
</reference>
<dbReference type="EMBL" id="CP000386">
    <property type="protein sequence ID" value="ABG05082.1"/>
    <property type="molecule type" value="Genomic_DNA"/>
</dbReference>
<dbReference type="SMR" id="Q1AU46"/>
<dbReference type="STRING" id="266117.Rxyl_2138"/>
<dbReference type="KEGG" id="rxy:Rxyl_2138"/>
<dbReference type="eggNOG" id="COG0098">
    <property type="taxonomic scope" value="Bacteria"/>
</dbReference>
<dbReference type="HOGENOM" id="CLU_065898_2_2_11"/>
<dbReference type="PhylomeDB" id="Q1AU46"/>
<dbReference type="Proteomes" id="UP000006637">
    <property type="component" value="Chromosome"/>
</dbReference>
<dbReference type="GO" id="GO:0015935">
    <property type="term" value="C:small ribosomal subunit"/>
    <property type="evidence" value="ECO:0007669"/>
    <property type="project" value="InterPro"/>
</dbReference>
<dbReference type="GO" id="GO:0019843">
    <property type="term" value="F:rRNA binding"/>
    <property type="evidence" value="ECO:0007669"/>
    <property type="project" value="UniProtKB-UniRule"/>
</dbReference>
<dbReference type="GO" id="GO:0003735">
    <property type="term" value="F:structural constituent of ribosome"/>
    <property type="evidence" value="ECO:0007669"/>
    <property type="project" value="InterPro"/>
</dbReference>
<dbReference type="GO" id="GO:0006412">
    <property type="term" value="P:translation"/>
    <property type="evidence" value="ECO:0007669"/>
    <property type="project" value="UniProtKB-UniRule"/>
</dbReference>
<dbReference type="FunFam" id="3.30.160.20:FF:000001">
    <property type="entry name" value="30S ribosomal protein S5"/>
    <property type="match status" value="1"/>
</dbReference>
<dbReference type="FunFam" id="3.30.230.10:FF:000002">
    <property type="entry name" value="30S ribosomal protein S5"/>
    <property type="match status" value="1"/>
</dbReference>
<dbReference type="Gene3D" id="3.30.160.20">
    <property type="match status" value="1"/>
</dbReference>
<dbReference type="Gene3D" id="3.30.230.10">
    <property type="match status" value="1"/>
</dbReference>
<dbReference type="HAMAP" id="MF_01307_B">
    <property type="entry name" value="Ribosomal_uS5_B"/>
    <property type="match status" value="1"/>
</dbReference>
<dbReference type="InterPro" id="IPR020568">
    <property type="entry name" value="Ribosomal_Su5_D2-typ_SF"/>
</dbReference>
<dbReference type="InterPro" id="IPR000851">
    <property type="entry name" value="Ribosomal_uS5"/>
</dbReference>
<dbReference type="InterPro" id="IPR005712">
    <property type="entry name" value="Ribosomal_uS5_bac-type"/>
</dbReference>
<dbReference type="InterPro" id="IPR005324">
    <property type="entry name" value="Ribosomal_uS5_C"/>
</dbReference>
<dbReference type="InterPro" id="IPR013810">
    <property type="entry name" value="Ribosomal_uS5_N"/>
</dbReference>
<dbReference type="InterPro" id="IPR014721">
    <property type="entry name" value="Ribsml_uS5_D2-typ_fold_subgr"/>
</dbReference>
<dbReference type="NCBIfam" id="TIGR01021">
    <property type="entry name" value="rpsE_bact"/>
    <property type="match status" value="1"/>
</dbReference>
<dbReference type="PANTHER" id="PTHR48277">
    <property type="entry name" value="MITOCHONDRIAL RIBOSOMAL PROTEIN S5"/>
    <property type="match status" value="1"/>
</dbReference>
<dbReference type="PANTHER" id="PTHR48277:SF1">
    <property type="entry name" value="MITOCHONDRIAL RIBOSOMAL PROTEIN S5"/>
    <property type="match status" value="1"/>
</dbReference>
<dbReference type="Pfam" id="PF00333">
    <property type="entry name" value="Ribosomal_S5"/>
    <property type="match status" value="1"/>
</dbReference>
<dbReference type="Pfam" id="PF03719">
    <property type="entry name" value="Ribosomal_S5_C"/>
    <property type="match status" value="1"/>
</dbReference>
<dbReference type="SUPFAM" id="SSF54768">
    <property type="entry name" value="dsRNA-binding domain-like"/>
    <property type="match status" value="1"/>
</dbReference>
<dbReference type="SUPFAM" id="SSF54211">
    <property type="entry name" value="Ribosomal protein S5 domain 2-like"/>
    <property type="match status" value="1"/>
</dbReference>
<dbReference type="PROSITE" id="PS50881">
    <property type="entry name" value="S5_DSRBD"/>
    <property type="match status" value="1"/>
</dbReference>
<accession>Q1AU46</accession>
<evidence type="ECO:0000255" key="1">
    <source>
        <dbReference type="HAMAP-Rule" id="MF_01307"/>
    </source>
</evidence>
<evidence type="ECO:0000256" key="2">
    <source>
        <dbReference type="SAM" id="MobiDB-lite"/>
    </source>
</evidence>
<evidence type="ECO:0000305" key="3"/>
<feature type="chain" id="PRO_0000323188" description="Small ribosomal subunit protein uS5">
    <location>
        <begin position="1"/>
        <end position="200"/>
    </location>
</feature>
<feature type="domain" description="S5 DRBM" evidence="1">
    <location>
        <begin position="48"/>
        <end position="111"/>
    </location>
</feature>
<feature type="region of interest" description="Disordered" evidence="2">
    <location>
        <begin position="1"/>
        <end position="49"/>
    </location>
</feature>
<feature type="compositionally biased region" description="Polar residues" evidence="2">
    <location>
        <begin position="1"/>
        <end position="12"/>
    </location>
</feature>
<feature type="compositionally biased region" description="Gly residues" evidence="2">
    <location>
        <begin position="13"/>
        <end position="27"/>
    </location>
</feature>
<feature type="compositionally biased region" description="Basic and acidic residues" evidence="2">
    <location>
        <begin position="29"/>
        <end position="49"/>
    </location>
</feature>
<protein>
    <recommendedName>
        <fullName evidence="1">Small ribosomal subunit protein uS5</fullName>
    </recommendedName>
    <alternativeName>
        <fullName evidence="3">30S ribosomal protein S5</fullName>
    </alternativeName>
</protein>
<organism>
    <name type="scientific">Rubrobacter xylanophilus (strain DSM 9941 / JCM 11954 / NBRC 16129 / PRD-1)</name>
    <dbReference type="NCBI Taxonomy" id="266117"/>
    <lineage>
        <taxon>Bacteria</taxon>
        <taxon>Bacillati</taxon>
        <taxon>Actinomycetota</taxon>
        <taxon>Rubrobacteria</taxon>
        <taxon>Rubrobacterales</taxon>
        <taxon>Rubrobacteraceae</taxon>
        <taxon>Rubrobacter</taxon>
    </lineage>
</organism>
<proteinExistence type="inferred from homology"/>
<keyword id="KW-1185">Reference proteome</keyword>
<keyword id="KW-0687">Ribonucleoprotein</keyword>
<keyword id="KW-0689">Ribosomal protein</keyword>
<keyword id="KW-0694">RNA-binding</keyword>
<keyword id="KW-0699">rRNA-binding</keyword>
<gene>
    <name evidence="1" type="primary">rpsE</name>
    <name type="ordered locus">Rxyl_2138</name>
</gene>
<sequence>MGRPRTSQTRGQGPSGATGGNPRGGGSTTRERDARGARPGERDGGSEIQDRVVQIRRVAKVKKGGRRLNFSALVVVGDGQGRVGVGLGKANTVPAAIAKGQEKARHAMFDVPMRNTTIPHEVVGEYESSRVLLKPASEGTGVIAGGGVRAVLELAGIKDVLTKALGSTTPVNLVRATEDGLRQLRTKAQIEQIRGVKVRL</sequence>
<name>RS5_RUBXD</name>